<keyword id="KW-0002">3D-structure</keyword>
<keyword id="KW-0378">Hydrolase</keyword>
<keyword id="KW-1185">Reference proteome</keyword>
<evidence type="ECO:0000250" key="1"/>
<evidence type="ECO:0000305" key="2"/>
<evidence type="ECO:0007829" key="3">
    <source>
        <dbReference type="PDB" id="3ED5"/>
    </source>
</evidence>
<dbReference type="EC" id="3.-.-.-"/>
<dbReference type="EMBL" id="D86418">
    <property type="protein sequence ID" value="BAA20111.1"/>
    <property type="molecule type" value="Genomic_DNA"/>
</dbReference>
<dbReference type="EMBL" id="AL009126">
    <property type="protein sequence ID" value="CAB12552.1"/>
    <property type="molecule type" value="Genomic_DNA"/>
</dbReference>
<dbReference type="PIR" id="E69814">
    <property type="entry name" value="E69814"/>
</dbReference>
<dbReference type="RefSeq" id="WP_003244307.1">
    <property type="nucleotide sequence ID" value="NZ_OZ025638.1"/>
</dbReference>
<dbReference type="PDB" id="3ED5">
    <property type="method" value="X-ray"/>
    <property type="resolution" value="1.72 A"/>
    <property type="chains" value="A=1-235"/>
</dbReference>
<dbReference type="PDB" id="3I76">
    <property type="method" value="X-ray"/>
    <property type="resolution" value="2.00 A"/>
    <property type="chains" value="A/B/C=2-234"/>
</dbReference>
<dbReference type="PDBsum" id="3ED5"/>
<dbReference type="PDBsum" id="3I76"/>
<dbReference type="SMR" id="O06480"/>
<dbReference type="FunCoup" id="O06480">
    <property type="interactions" value="142"/>
</dbReference>
<dbReference type="STRING" id="224308.BSU07330"/>
<dbReference type="PaxDb" id="224308-BSU07330"/>
<dbReference type="DNASU" id="936095"/>
<dbReference type="EnsemblBacteria" id="CAB12552">
    <property type="protein sequence ID" value="CAB12552"/>
    <property type="gene ID" value="BSU_07330"/>
</dbReference>
<dbReference type="GeneID" id="936095"/>
<dbReference type="KEGG" id="bsu:BSU07330"/>
<dbReference type="PATRIC" id="fig|224308.179.peg.795"/>
<dbReference type="eggNOG" id="COG1011">
    <property type="taxonomic scope" value="Bacteria"/>
</dbReference>
<dbReference type="InParanoid" id="O06480"/>
<dbReference type="OrthoDB" id="9802350at2"/>
<dbReference type="PhylomeDB" id="O06480"/>
<dbReference type="BioCyc" id="BSUB:BSU07330-MONOMER"/>
<dbReference type="SABIO-RK" id="O06480"/>
<dbReference type="EvolutionaryTrace" id="O06480"/>
<dbReference type="Proteomes" id="UP000001570">
    <property type="component" value="Chromosome"/>
</dbReference>
<dbReference type="GO" id="GO:0008253">
    <property type="term" value="F:5'-nucleotidase activity"/>
    <property type="evidence" value="ECO:0000318"/>
    <property type="project" value="GO_Central"/>
</dbReference>
<dbReference type="GO" id="GO:0009222">
    <property type="term" value="P:pyrimidine ribonucleotide catabolic process"/>
    <property type="evidence" value="ECO:0000318"/>
    <property type="project" value="GO_Central"/>
</dbReference>
<dbReference type="CDD" id="cd04305">
    <property type="entry name" value="HAD_Neu5Ac-Pase_like"/>
    <property type="match status" value="1"/>
</dbReference>
<dbReference type="Gene3D" id="3.40.50.1000">
    <property type="entry name" value="HAD superfamily/HAD-like"/>
    <property type="match status" value="1"/>
</dbReference>
<dbReference type="Gene3D" id="1.10.150.240">
    <property type="entry name" value="Putative phosphatase, domain 2"/>
    <property type="match status" value="1"/>
</dbReference>
<dbReference type="InterPro" id="IPR036412">
    <property type="entry name" value="HAD-like_sf"/>
</dbReference>
<dbReference type="InterPro" id="IPR006439">
    <property type="entry name" value="HAD-SF_hydro_IA"/>
</dbReference>
<dbReference type="InterPro" id="IPR011951">
    <property type="entry name" value="HAD-SF_hydro_IA_YjjG/PynA"/>
</dbReference>
<dbReference type="InterPro" id="IPR023214">
    <property type="entry name" value="HAD_sf"/>
</dbReference>
<dbReference type="InterPro" id="IPR023198">
    <property type="entry name" value="PGP-like_dom2"/>
</dbReference>
<dbReference type="InterPro" id="IPR052550">
    <property type="entry name" value="Pyrimidine_5'-ntase_YjjG"/>
</dbReference>
<dbReference type="NCBIfam" id="TIGR01549">
    <property type="entry name" value="HAD-SF-IA-v1"/>
    <property type="match status" value="1"/>
</dbReference>
<dbReference type="NCBIfam" id="TIGR02254">
    <property type="entry name" value="YjjG_YfnB"/>
    <property type="match status" value="1"/>
</dbReference>
<dbReference type="PANTHER" id="PTHR47478">
    <property type="match status" value="1"/>
</dbReference>
<dbReference type="PANTHER" id="PTHR47478:SF1">
    <property type="entry name" value="PYRIMIDINE 5'-NUCLEOTIDASE YJJG"/>
    <property type="match status" value="1"/>
</dbReference>
<dbReference type="Pfam" id="PF00702">
    <property type="entry name" value="Hydrolase"/>
    <property type="match status" value="1"/>
</dbReference>
<dbReference type="SFLD" id="SFLDG01135">
    <property type="entry name" value="C1.5.6:_HAD__Beta-PGM__Phospha"/>
    <property type="match status" value="1"/>
</dbReference>
<dbReference type="SFLD" id="SFLDS00003">
    <property type="entry name" value="Haloacid_Dehalogenase"/>
    <property type="match status" value="1"/>
</dbReference>
<dbReference type="SUPFAM" id="SSF56784">
    <property type="entry name" value="HAD-like"/>
    <property type="match status" value="1"/>
</dbReference>
<accession>O06480</accession>
<accession>Q797A8</accession>
<organism>
    <name type="scientific">Bacillus subtilis (strain 168)</name>
    <dbReference type="NCBI Taxonomy" id="224308"/>
    <lineage>
        <taxon>Bacteria</taxon>
        <taxon>Bacillati</taxon>
        <taxon>Bacillota</taxon>
        <taxon>Bacilli</taxon>
        <taxon>Bacillales</taxon>
        <taxon>Bacillaceae</taxon>
        <taxon>Bacillus</taxon>
    </lineage>
</organism>
<name>YFNB_BACSU</name>
<sequence>MKRYRTLLFDVDDTILDFQAAEALALRLLFEDQNIPLTNDMKAQYKTINQGLWRAFEEGKMTRDEVVNTRFSALLKEYGYEADGALLEQKYRRFLEEGHQLIDGAFDLISNLQQQFDLYIVTNGVSHTQYKRLRDSGLFPFFKDIFVSEDTGFQKPMKEYFNYVFERIPQFSAEHTLIIGDSLTADIKGGQLAGLDTCWMNPDMKPNVPEIIPTYEIRKLEELYHILNIENTVSC</sequence>
<reference key="1">
    <citation type="journal article" date="1997" name="Microbiology">
        <title>A 23.4 kb segment at the 69 degrees-70 degrees region of the Bacillus subtilis genome.</title>
        <authorList>
            <person name="Yamamoto H."/>
            <person name="Uchiyama S."/>
            <person name="Nugroho F.A."/>
            <person name="Sekiguchi J."/>
        </authorList>
    </citation>
    <scope>NUCLEOTIDE SEQUENCE [GENOMIC DNA]</scope>
    <source>
        <strain>168 / AC327</strain>
    </source>
</reference>
<reference key="2">
    <citation type="journal article" date="1997" name="Nature">
        <title>The complete genome sequence of the Gram-positive bacterium Bacillus subtilis.</title>
        <authorList>
            <person name="Kunst F."/>
            <person name="Ogasawara N."/>
            <person name="Moszer I."/>
            <person name="Albertini A.M."/>
            <person name="Alloni G."/>
            <person name="Azevedo V."/>
            <person name="Bertero M.G."/>
            <person name="Bessieres P."/>
            <person name="Bolotin A."/>
            <person name="Borchert S."/>
            <person name="Borriss R."/>
            <person name="Boursier L."/>
            <person name="Brans A."/>
            <person name="Braun M."/>
            <person name="Brignell S.C."/>
            <person name="Bron S."/>
            <person name="Brouillet S."/>
            <person name="Bruschi C.V."/>
            <person name="Caldwell B."/>
            <person name="Capuano V."/>
            <person name="Carter N.M."/>
            <person name="Choi S.-K."/>
            <person name="Codani J.-J."/>
            <person name="Connerton I.F."/>
            <person name="Cummings N.J."/>
            <person name="Daniel R.A."/>
            <person name="Denizot F."/>
            <person name="Devine K.M."/>
            <person name="Duesterhoeft A."/>
            <person name="Ehrlich S.D."/>
            <person name="Emmerson P.T."/>
            <person name="Entian K.-D."/>
            <person name="Errington J."/>
            <person name="Fabret C."/>
            <person name="Ferrari E."/>
            <person name="Foulger D."/>
            <person name="Fritz C."/>
            <person name="Fujita M."/>
            <person name="Fujita Y."/>
            <person name="Fuma S."/>
            <person name="Galizzi A."/>
            <person name="Galleron N."/>
            <person name="Ghim S.-Y."/>
            <person name="Glaser P."/>
            <person name="Goffeau A."/>
            <person name="Golightly E.J."/>
            <person name="Grandi G."/>
            <person name="Guiseppi G."/>
            <person name="Guy B.J."/>
            <person name="Haga K."/>
            <person name="Haiech J."/>
            <person name="Harwood C.R."/>
            <person name="Henaut A."/>
            <person name="Hilbert H."/>
            <person name="Holsappel S."/>
            <person name="Hosono S."/>
            <person name="Hullo M.-F."/>
            <person name="Itaya M."/>
            <person name="Jones L.-M."/>
            <person name="Joris B."/>
            <person name="Karamata D."/>
            <person name="Kasahara Y."/>
            <person name="Klaerr-Blanchard M."/>
            <person name="Klein C."/>
            <person name="Kobayashi Y."/>
            <person name="Koetter P."/>
            <person name="Koningstein G."/>
            <person name="Krogh S."/>
            <person name="Kumano M."/>
            <person name="Kurita K."/>
            <person name="Lapidus A."/>
            <person name="Lardinois S."/>
            <person name="Lauber J."/>
            <person name="Lazarevic V."/>
            <person name="Lee S.-M."/>
            <person name="Levine A."/>
            <person name="Liu H."/>
            <person name="Masuda S."/>
            <person name="Mauel C."/>
            <person name="Medigue C."/>
            <person name="Medina N."/>
            <person name="Mellado R.P."/>
            <person name="Mizuno M."/>
            <person name="Moestl D."/>
            <person name="Nakai S."/>
            <person name="Noback M."/>
            <person name="Noone D."/>
            <person name="O'Reilly M."/>
            <person name="Ogawa K."/>
            <person name="Ogiwara A."/>
            <person name="Oudega B."/>
            <person name="Park S.-H."/>
            <person name="Parro V."/>
            <person name="Pohl T.M."/>
            <person name="Portetelle D."/>
            <person name="Porwollik S."/>
            <person name="Prescott A.M."/>
            <person name="Presecan E."/>
            <person name="Pujic P."/>
            <person name="Purnelle B."/>
            <person name="Rapoport G."/>
            <person name="Rey M."/>
            <person name="Reynolds S."/>
            <person name="Rieger M."/>
            <person name="Rivolta C."/>
            <person name="Rocha E."/>
            <person name="Roche B."/>
            <person name="Rose M."/>
            <person name="Sadaie Y."/>
            <person name="Sato T."/>
            <person name="Scanlan E."/>
            <person name="Schleich S."/>
            <person name="Schroeter R."/>
            <person name="Scoffone F."/>
            <person name="Sekiguchi J."/>
            <person name="Sekowska A."/>
            <person name="Seror S.J."/>
            <person name="Serror P."/>
            <person name="Shin B.-S."/>
            <person name="Soldo B."/>
            <person name="Sorokin A."/>
            <person name="Tacconi E."/>
            <person name="Takagi T."/>
            <person name="Takahashi H."/>
            <person name="Takemaru K."/>
            <person name="Takeuchi M."/>
            <person name="Tamakoshi A."/>
            <person name="Tanaka T."/>
            <person name="Terpstra P."/>
            <person name="Tognoni A."/>
            <person name="Tosato V."/>
            <person name="Uchiyama S."/>
            <person name="Vandenbol M."/>
            <person name="Vannier F."/>
            <person name="Vassarotti A."/>
            <person name="Viari A."/>
            <person name="Wambutt R."/>
            <person name="Wedler E."/>
            <person name="Wedler H."/>
            <person name="Weitzenegger T."/>
            <person name="Winters P."/>
            <person name="Wipat A."/>
            <person name="Yamamoto H."/>
            <person name="Yamane K."/>
            <person name="Yasumoto K."/>
            <person name="Yata K."/>
            <person name="Yoshida K."/>
            <person name="Yoshikawa H.-F."/>
            <person name="Zumstein E."/>
            <person name="Yoshikawa H."/>
            <person name="Danchin A."/>
        </authorList>
    </citation>
    <scope>NUCLEOTIDE SEQUENCE [LARGE SCALE GENOMIC DNA]</scope>
    <source>
        <strain>168</strain>
    </source>
</reference>
<reference key="3">
    <citation type="submission" date="2008-09" db="PDB data bank">
        <title>The crystal structure of yfnB from Bacillus subtilis subsp. subtilis str. 168.</title>
        <authorList>
            <consortium name="Midwest center for structural genomics (MCSG)"/>
        </authorList>
    </citation>
    <scope>X-RAY CRYSTALLOGRAPHY (1.72 ANGSTROMS)</scope>
</reference>
<feature type="chain" id="PRO_0000360840" description="Putative HAD-hydrolase YfnB">
    <location>
        <begin position="1"/>
        <end position="235"/>
    </location>
</feature>
<feature type="active site" description="Nucleophile" evidence="1">
    <location>
        <position position="10"/>
    </location>
</feature>
<feature type="strand" evidence="3">
    <location>
        <begin position="6"/>
        <end position="9"/>
    </location>
</feature>
<feature type="turn" evidence="3">
    <location>
        <begin position="13"/>
        <end position="15"/>
    </location>
</feature>
<feature type="helix" evidence="3">
    <location>
        <begin position="18"/>
        <end position="32"/>
    </location>
</feature>
<feature type="helix" evidence="3">
    <location>
        <begin position="39"/>
        <end position="57"/>
    </location>
</feature>
<feature type="helix" evidence="3">
    <location>
        <begin position="63"/>
        <end position="77"/>
    </location>
</feature>
<feature type="helix" evidence="3">
    <location>
        <begin position="84"/>
        <end position="95"/>
    </location>
</feature>
<feature type="helix" evidence="3">
    <location>
        <begin position="105"/>
        <end position="113"/>
    </location>
</feature>
<feature type="strand" evidence="3">
    <location>
        <begin position="116"/>
        <end position="122"/>
    </location>
</feature>
<feature type="helix" evidence="3">
    <location>
        <begin position="126"/>
        <end position="135"/>
    </location>
</feature>
<feature type="helix" evidence="3">
    <location>
        <begin position="139"/>
        <end position="141"/>
    </location>
</feature>
<feature type="strand" evidence="3">
    <location>
        <begin position="143"/>
        <end position="147"/>
    </location>
</feature>
<feature type="helix" evidence="3">
    <location>
        <begin position="148"/>
        <end position="150"/>
    </location>
</feature>
<feature type="helix" evidence="3">
    <location>
        <begin position="158"/>
        <end position="166"/>
    </location>
</feature>
<feature type="helix" evidence="3">
    <location>
        <begin position="173"/>
        <end position="175"/>
    </location>
</feature>
<feature type="strand" evidence="3">
    <location>
        <begin position="176"/>
        <end position="181"/>
    </location>
</feature>
<feature type="turn" evidence="3">
    <location>
        <begin position="183"/>
        <end position="186"/>
    </location>
</feature>
<feature type="helix" evidence="3">
    <location>
        <begin position="187"/>
        <end position="192"/>
    </location>
</feature>
<feature type="strand" evidence="3">
    <location>
        <begin position="196"/>
        <end position="200"/>
    </location>
</feature>
<feature type="strand" evidence="3">
    <location>
        <begin position="214"/>
        <end position="219"/>
    </location>
</feature>
<feature type="helix" evidence="3">
    <location>
        <begin position="220"/>
        <end position="222"/>
    </location>
</feature>
<feature type="helix" evidence="3">
    <location>
        <begin position="223"/>
        <end position="227"/>
    </location>
</feature>
<gene>
    <name type="primary">yfnB</name>
    <name type="ordered locus">BSU07330</name>
</gene>
<protein>
    <recommendedName>
        <fullName>Putative HAD-hydrolase YfnB</fullName>
        <ecNumber>3.-.-.-</ecNumber>
    </recommendedName>
</protein>
<comment type="similarity">
    <text evidence="2">Belongs to the HAD-like hydrolase superfamily. YjjG family.</text>
</comment>
<proteinExistence type="evidence at protein level"/>